<protein>
    <recommendedName>
        <fullName>XK-related protein 3</fullName>
    </recommendedName>
    <alternativeName>
        <fullName>X Kell blood group-related 3</fullName>
    </alternativeName>
    <alternativeName>
        <fullName>XTES</fullName>
    </alternativeName>
</protein>
<feature type="chain" id="PRO_0000190776" description="XK-related protein 3">
    <location>
        <begin position="1"/>
        <end position="459"/>
    </location>
</feature>
<feature type="transmembrane region" description="Helical" evidence="1">
    <location>
        <begin position="35"/>
        <end position="55"/>
    </location>
</feature>
<feature type="transmembrane region" description="Helical" evidence="1">
    <location>
        <begin position="68"/>
        <end position="88"/>
    </location>
</feature>
<feature type="transmembrane region" description="Helical" evidence="1">
    <location>
        <begin position="97"/>
        <end position="117"/>
    </location>
</feature>
<feature type="transmembrane region" description="Helical" evidence="1">
    <location>
        <begin position="169"/>
        <end position="189"/>
    </location>
</feature>
<feature type="transmembrane region" description="Helical" evidence="1">
    <location>
        <begin position="199"/>
        <end position="219"/>
    </location>
</feature>
<feature type="transmembrane region" description="Helical" evidence="1">
    <location>
        <begin position="238"/>
        <end position="258"/>
    </location>
</feature>
<feature type="transmembrane region" description="Helical" evidence="1">
    <location>
        <begin position="264"/>
        <end position="284"/>
    </location>
</feature>
<feature type="transmembrane region" description="Helical" evidence="1">
    <location>
        <begin position="300"/>
        <end position="320"/>
    </location>
</feature>
<feature type="transmembrane region" description="Helical" evidence="1">
    <location>
        <begin position="345"/>
        <end position="365"/>
    </location>
</feature>
<feature type="transmembrane region" description="Helical" evidence="1">
    <location>
        <begin position="377"/>
        <end position="397"/>
    </location>
</feature>
<feature type="sequence variant" id="VAR_053740" description="In dbSNP:rs5748648.">
    <original>T</original>
    <variation>M</variation>
    <location>
        <position position="143"/>
    </location>
</feature>
<feature type="sequence variant" id="VAR_053741" description="In dbSNP:rs9605146." evidence="2">
    <original>P</original>
    <variation>L</variation>
    <location>
        <position position="232"/>
    </location>
</feature>
<feature type="sequence variant" id="VAR_053742" description="In dbSNP:rs5748623." evidence="2 3">
    <original>F</original>
    <variation>L</variation>
    <location>
        <position position="255"/>
    </location>
</feature>
<feature type="sequence variant" id="VAR_053743" description="In dbSNP:rs5748622." evidence="2 3">
    <original>H</original>
    <variation>N</variation>
    <location>
        <position position="442"/>
    </location>
</feature>
<comment type="subcellular location">
    <subcellularLocation>
        <location evidence="3">Cell membrane</location>
        <topology evidence="3">Multi-pass membrane protein</topology>
    </subcellularLocation>
</comment>
<comment type="tissue specificity">
    <text evidence="3">Expressed predominantly, if not exclusively, in testis.</text>
</comment>
<comment type="similarity">
    <text evidence="4">Belongs to the XK family.</text>
</comment>
<keyword id="KW-1003">Cell membrane</keyword>
<keyword id="KW-0472">Membrane</keyword>
<keyword id="KW-1267">Proteomics identification</keyword>
<keyword id="KW-1185">Reference proteome</keyword>
<keyword id="KW-0812">Transmembrane</keyword>
<keyword id="KW-1133">Transmembrane helix</keyword>
<evidence type="ECO:0000255" key="1"/>
<evidence type="ECO:0000269" key="2">
    <source>
    </source>
</evidence>
<evidence type="ECO:0000269" key="3">
    <source>
    </source>
</evidence>
<evidence type="ECO:0000305" key="4"/>
<organism>
    <name type="scientific">Homo sapiens</name>
    <name type="common">Human</name>
    <dbReference type="NCBI Taxonomy" id="9606"/>
    <lineage>
        <taxon>Eukaryota</taxon>
        <taxon>Metazoa</taxon>
        <taxon>Chordata</taxon>
        <taxon>Craniata</taxon>
        <taxon>Vertebrata</taxon>
        <taxon>Euteleostomi</taxon>
        <taxon>Mammalia</taxon>
        <taxon>Eutheria</taxon>
        <taxon>Euarchontoglires</taxon>
        <taxon>Primates</taxon>
        <taxon>Haplorrhini</taxon>
        <taxon>Catarrhini</taxon>
        <taxon>Hominidae</taxon>
        <taxon>Homo</taxon>
    </lineage>
</organism>
<proteinExistence type="evidence at protein level"/>
<dbReference type="EMBL" id="AY534240">
    <property type="protein sequence ID" value="AAT07089.1"/>
    <property type="molecule type" value="mRNA"/>
</dbReference>
<dbReference type="EMBL" id="AY989815">
    <property type="protein sequence ID" value="AAX86010.1"/>
    <property type="molecule type" value="mRNA"/>
</dbReference>
<dbReference type="EMBL" id="AK098608">
    <property type="protein sequence ID" value="BAC05352.1"/>
    <property type="molecule type" value="mRNA"/>
</dbReference>
<dbReference type="EMBL" id="BC137521">
    <property type="protein sequence ID" value="AAI37522.1"/>
    <property type="molecule type" value="mRNA"/>
</dbReference>
<dbReference type="EMBL" id="BC137522">
    <property type="protein sequence ID" value="AAI37523.1"/>
    <property type="molecule type" value="mRNA"/>
</dbReference>
<dbReference type="CCDS" id="CCDS42975.1"/>
<dbReference type="RefSeq" id="NP_001305180.1">
    <property type="nucleotide sequence ID" value="NM_001318251.3"/>
</dbReference>
<dbReference type="RefSeq" id="NP_001373884.1">
    <property type="nucleotide sequence ID" value="NM_001386955.1"/>
</dbReference>
<dbReference type="RefSeq" id="NP_001373885.1">
    <property type="nucleotide sequence ID" value="NM_001386956.1"/>
</dbReference>
<dbReference type="RefSeq" id="NP_001373886.1">
    <property type="nucleotide sequence ID" value="NM_001386957.1"/>
</dbReference>
<dbReference type="RefSeq" id="NP_787074.2">
    <property type="nucleotide sequence ID" value="NM_175878.5"/>
</dbReference>
<dbReference type="RefSeq" id="XP_016884089.1">
    <property type="nucleotide sequence ID" value="XM_017028600.1"/>
</dbReference>
<dbReference type="SMR" id="Q5GH77"/>
<dbReference type="BioGRID" id="127266">
    <property type="interactions" value="7"/>
</dbReference>
<dbReference type="STRING" id="9606.ENSP00000331704"/>
<dbReference type="TCDB" id="2.A.112.1.7">
    <property type="family name" value="the kx blood-group antigen (kxa) family"/>
</dbReference>
<dbReference type="iPTMnet" id="Q5GH77"/>
<dbReference type="PhosphoSitePlus" id="Q5GH77"/>
<dbReference type="BioMuta" id="XKR3"/>
<dbReference type="DMDM" id="74707819"/>
<dbReference type="jPOST" id="Q5GH77"/>
<dbReference type="MassIVE" id="Q5GH77"/>
<dbReference type="PaxDb" id="9606-ENSP00000331704"/>
<dbReference type="PeptideAtlas" id="Q5GH77"/>
<dbReference type="ProteomicsDB" id="62835"/>
<dbReference type="Antibodypedia" id="22625">
    <property type="antibodies" value="74 antibodies from 17 providers"/>
</dbReference>
<dbReference type="DNASU" id="150165"/>
<dbReference type="Ensembl" id="ENST00000331428.5">
    <property type="protein sequence ID" value="ENSP00000331704.5"/>
    <property type="gene ID" value="ENSG00000172967.8"/>
</dbReference>
<dbReference type="Ensembl" id="ENST00000684488.1">
    <property type="protein sequence ID" value="ENSP00000507478.1"/>
    <property type="gene ID" value="ENSG00000172967.8"/>
</dbReference>
<dbReference type="GeneID" id="150165"/>
<dbReference type="KEGG" id="hsa:150165"/>
<dbReference type="MANE-Select" id="ENST00000684488.1">
    <property type="protein sequence ID" value="ENSP00000507478.1"/>
    <property type="RefSeq nucleotide sequence ID" value="NM_001386955.1"/>
    <property type="RefSeq protein sequence ID" value="NP_001373884.1"/>
</dbReference>
<dbReference type="UCSC" id="uc002zlv.4">
    <property type="organism name" value="human"/>
</dbReference>
<dbReference type="AGR" id="HGNC:28778"/>
<dbReference type="CTD" id="150165"/>
<dbReference type="DisGeNET" id="150165"/>
<dbReference type="GeneCards" id="XKR3"/>
<dbReference type="HGNC" id="HGNC:28778">
    <property type="gene designation" value="XKR3"/>
</dbReference>
<dbReference type="HPA" id="ENSG00000172967">
    <property type="expression patterns" value="Tissue enriched (testis)"/>
</dbReference>
<dbReference type="MIM" id="611674">
    <property type="type" value="gene"/>
</dbReference>
<dbReference type="neXtProt" id="NX_Q5GH77"/>
<dbReference type="OpenTargets" id="ENSG00000172967"/>
<dbReference type="PharmGKB" id="PA142670562"/>
<dbReference type="VEuPathDB" id="HostDB:ENSG00000172967"/>
<dbReference type="eggNOG" id="ENOG502QSH6">
    <property type="taxonomic scope" value="Eukaryota"/>
</dbReference>
<dbReference type="GeneTree" id="ENSGT00390000003231"/>
<dbReference type="HOGENOM" id="CLU_037429_1_1_1"/>
<dbReference type="InParanoid" id="Q5GH77"/>
<dbReference type="OMA" id="NFMQQKA"/>
<dbReference type="OrthoDB" id="10037417at2759"/>
<dbReference type="PAN-GO" id="Q5GH77">
    <property type="GO annotations" value="0 GO annotations based on evolutionary models"/>
</dbReference>
<dbReference type="PhylomeDB" id="Q5GH77"/>
<dbReference type="TreeFam" id="TF331465"/>
<dbReference type="PathwayCommons" id="Q5GH77"/>
<dbReference type="BioGRID-ORCS" id="150165">
    <property type="hits" value="21 hits in 1146 CRISPR screens"/>
</dbReference>
<dbReference type="ChiTaRS" id="XKR3">
    <property type="organism name" value="human"/>
</dbReference>
<dbReference type="GenomeRNAi" id="150165"/>
<dbReference type="Pharos" id="Q5GH77">
    <property type="development level" value="Tbio"/>
</dbReference>
<dbReference type="PRO" id="PR:Q5GH77"/>
<dbReference type="Proteomes" id="UP000005640">
    <property type="component" value="Chromosome 22"/>
</dbReference>
<dbReference type="RNAct" id="Q5GH77">
    <property type="molecule type" value="protein"/>
</dbReference>
<dbReference type="Bgee" id="ENSG00000172967">
    <property type="expression patterns" value="Expressed in male germ line stem cell (sensu Vertebrata) in testis and 16 other cell types or tissues"/>
</dbReference>
<dbReference type="GO" id="GO:0005886">
    <property type="term" value="C:plasma membrane"/>
    <property type="evidence" value="ECO:0007669"/>
    <property type="project" value="UniProtKB-SubCell"/>
</dbReference>
<dbReference type="InterPro" id="IPR018629">
    <property type="entry name" value="XK-rel"/>
</dbReference>
<dbReference type="InterPro" id="IPR051773">
    <property type="entry name" value="XK-related_adapter"/>
</dbReference>
<dbReference type="PANTHER" id="PTHR14297">
    <property type="entry name" value="MEMBRANE TRANSPORT PROTEIN XK FAMILY MEMBER"/>
    <property type="match status" value="1"/>
</dbReference>
<dbReference type="PANTHER" id="PTHR14297:SF9">
    <property type="entry name" value="XK-RELATED PROTEIN 3"/>
    <property type="match status" value="1"/>
</dbReference>
<dbReference type="Pfam" id="PF09815">
    <property type="entry name" value="XK-related"/>
    <property type="match status" value="1"/>
</dbReference>
<accession>Q5GH77</accession>
<accession>B2RPN1</accession>
<accession>Q52PG8</accession>
<accession>Q8N7E1</accession>
<gene>
    <name type="primary">XKR3</name>
    <name type="synonym">XRG3</name>
</gene>
<name>XKR3_HUMAN</name>
<sequence>METVFEEMDEESTGGVSSSKEEIVLGQRLHLSFPFSIIFSTVLYCGEVAFGLYMFEIYRKANDTFWMSFTISFIIVGAILDQIILMFFNKDLRRNKAALLFWHILLLGPIVRCLHTIRNYHKWLKNLKQEKEETQVSITKRNTMLEREIAFSIRDNFMQQKAFKYMSVIQAFLGSVPQLILQMYISLTIREWPLNRALLMTFSLLSVTYGAIRCNILAIQISNDDTTIKLPPIEFFCVVMWRFLEVISRVVTLAFFIASLKLKSLPVLLIIYFVSLLAPWLEFWKSGAHLPGNKENNSNMVGTVLMLFLITLLYAAINFSCWSAVKLQLSDDKIIDGRQRWGHRILHYSFQFLENVIMILVFRFFGGKTLLNCCDSLIAVQLIISYLLATGFMLLFYQYLYPWQSGKVLPGRTENQPEAPYYYVNIEKTEKNKNKQLRNYCHSCNRVGYFSIRKSMTCS</sequence>
<reference key="1">
    <citation type="submission" date="2004-01" db="EMBL/GenBank/DDBJ databases">
        <title>A superfamily of XK-related genes (XRG) widely expressed in vertebrates and invertebrates.</title>
        <authorList>
            <person name="Huang C.-H."/>
            <person name="Chen Y."/>
        </authorList>
    </citation>
    <scope>NUCLEOTIDE SEQUENCE [MRNA]</scope>
</reference>
<reference key="2">
    <citation type="journal article" date="2006" name="Gene">
        <title>Identification of two new members, XPLAC and XTES, of the XK family.</title>
        <authorList>
            <person name="Calenda G."/>
            <person name="Peng J."/>
            <person name="Redman C.M."/>
            <person name="Sha Q."/>
            <person name="Wu X."/>
            <person name="Lee S."/>
        </authorList>
    </citation>
    <scope>NUCLEOTIDE SEQUENCE [MRNA]</scope>
    <scope>SUBCELLULAR LOCATION</scope>
    <scope>TISSUE SPECIFICITY</scope>
    <scope>VARIANTS LEU-255 AND ASN-442</scope>
    <source>
        <tissue>Testis</tissue>
    </source>
</reference>
<reference key="3">
    <citation type="journal article" date="2004" name="Nat. Genet.">
        <title>Complete sequencing and characterization of 21,243 full-length human cDNAs.</title>
        <authorList>
            <person name="Ota T."/>
            <person name="Suzuki Y."/>
            <person name="Nishikawa T."/>
            <person name="Otsuki T."/>
            <person name="Sugiyama T."/>
            <person name="Irie R."/>
            <person name="Wakamatsu A."/>
            <person name="Hayashi K."/>
            <person name="Sato H."/>
            <person name="Nagai K."/>
            <person name="Kimura K."/>
            <person name="Makita H."/>
            <person name="Sekine M."/>
            <person name="Obayashi M."/>
            <person name="Nishi T."/>
            <person name="Shibahara T."/>
            <person name="Tanaka T."/>
            <person name="Ishii S."/>
            <person name="Yamamoto J."/>
            <person name="Saito K."/>
            <person name="Kawai Y."/>
            <person name="Isono Y."/>
            <person name="Nakamura Y."/>
            <person name="Nagahari K."/>
            <person name="Murakami K."/>
            <person name="Yasuda T."/>
            <person name="Iwayanagi T."/>
            <person name="Wagatsuma M."/>
            <person name="Shiratori A."/>
            <person name="Sudo H."/>
            <person name="Hosoiri T."/>
            <person name="Kaku Y."/>
            <person name="Kodaira H."/>
            <person name="Kondo H."/>
            <person name="Sugawara M."/>
            <person name="Takahashi M."/>
            <person name="Kanda K."/>
            <person name="Yokoi T."/>
            <person name="Furuya T."/>
            <person name="Kikkawa E."/>
            <person name="Omura Y."/>
            <person name="Abe K."/>
            <person name="Kamihara K."/>
            <person name="Katsuta N."/>
            <person name="Sato K."/>
            <person name="Tanikawa M."/>
            <person name="Yamazaki M."/>
            <person name="Ninomiya K."/>
            <person name="Ishibashi T."/>
            <person name="Yamashita H."/>
            <person name="Murakawa K."/>
            <person name="Fujimori K."/>
            <person name="Tanai H."/>
            <person name="Kimata M."/>
            <person name="Watanabe M."/>
            <person name="Hiraoka S."/>
            <person name="Chiba Y."/>
            <person name="Ishida S."/>
            <person name="Ono Y."/>
            <person name="Takiguchi S."/>
            <person name="Watanabe S."/>
            <person name="Yosida M."/>
            <person name="Hotuta T."/>
            <person name="Kusano J."/>
            <person name="Kanehori K."/>
            <person name="Takahashi-Fujii A."/>
            <person name="Hara H."/>
            <person name="Tanase T.-O."/>
            <person name="Nomura Y."/>
            <person name="Togiya S."/>
            <person name="Komai F."/>
            <person name="Hara R."/>
            <person name="Takeuchi K."/>
            <person name="Arita M."/>
            <person name="Imose N."/>
            <person name="Musashino K."/>
            <person name="Yuuki H."/>
            <person name="Oshima A."/>
            <person name="Sasaki N."/>
            <person name="Aotsuka S."/>
            <person name="Yoshikawa Y."/>
            <person name="Matsunawa H."/>
            <person name="Ichihara T."/>
            <person name="Shiohata N."/>
            <person name="Sano S."/>
            <person name="Moriya S."/>
            <person name="Momiyama H."/>
            <person name="Satoh N."/>
            <person name="Takami S."/>
            <person name="Terashima Y."/>
            <person name="Suzuki O."/>
            <person name="Nakagawa S."/>
            <person name="Senoh A."/>
            <person name="Mizoguchi H."/>
            <person name="Goto Y."/>
            <person name="Shimizu F."/>
            <person name="Wakebe H."/>
            <person name="Hishigaki H."/>
            <person name="Watanabe T."/>
            <person name="Sugiyama A."/>
            <person name="Takemoto M."/>
            <person name="Kawakami B."/>
            <person name="Yamazaki M."/>
            <person name="Watanabe K."/>
            <person name="Kumagai A."/>
            <person name="Itakura S."/>
            <person name="Fukuzumi Y."/>
            <person name="Fujimori Y."/>
            <person name="Komiyama M."/>
            <person name="Tashiro H."/>
            <person name="Tanigami A."/>
            <person name="Fujiwara T."/>
            <person name="Ono T."/>
            <person name="Yamada K."/>
            <person name="Fujii Y."/>
            <person name="Ozaki K."/>
            <person name="Hirao M."/>
            <person name="Ohmori Y."/>
            <person name="Kawabata A."/>
            <person name="Hikiji T."/>
            <person name="Kobatake N."/>
            <person name="Inagaki H."/>
            <person name="Ikema Y."/>
            <person name="Okamoto S."/>
            <person name="Okitani R."/>
            <person name="Kawakami T."/>
            <person name="Noguchi S."/>
            <person name="Itoh T."/>
            <person name="Shigeta K."/>
            <person name="Senba T."/>
            <person name="Matsumura K."/>
            <person name="Nakajima Y."/>
            <person name="Mizuno T."/>
            <person name="Morinaga M."/>
            <person name="Sasaki M."/>
            <person name="Togashi T."/>
            <person name="Oyama M."/>
            <person name="Hata H."/>
            <person name="Watanabe M."/>
            <person name="Komatsu T."/>
            <person name="Mizushima-Sugano J."/>
            <person name="Satoh T."/>
            <person name="Shirai Y."/>
            <person name="Takahashi Y."/>
            <person name="Nakagawa K."/>
            <person name="Okumura K."/>
            <person name="Nagase T."/>
            <person name="Nomura N."/>
            <person name="Kikuchi H."/>
            <person name="Masuho Y."/>
            <person name="Yamashita R."/>
            <person name="Nakai K."/>
            <person name="Yada T."/>
            <person name="Nakamura Y."/>
            <person name="Ohara O."/>
            <person name="Isogai T."/>
            <person name="Sugano S."/>
        </authorList>
    </citation>
    <scope>NUCLEOTIDE SEQUENCE [LARGE SCALE MRNA]</scope>
    <scope>VARIANTS LEU-232; LEU-255 AND ASN-442</scope>
    <source>
        <tissue>Testis</tissue>
    </source>
</reference>
<reference key="4">
    <citation type="journal article" date="2004" name="Genome Res.">
        <title>The status, quality, and expansion of the NIH full-length cDNA project: the Mammalian Gene Collection (MGC).</title>
        <authorList>
            <consortium name="The MGC Project Team"/>
        </authorList>
    </citation>
    <scope>NUCLEOTIDE SEQUENCE [LARGE SCALE MRNA]</scope>
</reference>